<protein>
    <recommendedName>
        <fullName evidence="1">Shikimate kinase</fullName>
        <shortName evidence="1">SK</shortName>
        <ecNumber evidence="1">2.7.1.71</ecNumber>
    </recommendedName>
</protein>
<organism>
    <name type="scientific">Staphylococcus aureus (strain MRSA252)</name>
    <dbReference type="NCBI Taxonomy" id="282458"/>
    <lineage>
        <taxon>Bacteria</taxon>
        <taxon>Bacillati</taxon>
        <taxon>Bacillota</taxon>
        <taxon>Bacilli</taxon>
        <taxon>Bacillales</taxon>
        <taxon>Staphylococcaceae</taxon>
        <taxon>Staphylococcus</taxon>
    </lineage>
</organism>
<proteinExistence type="inferred from homology"/>
<sequence length="174" mass="20233">MNHDKSPIILIGFMGTGKSTIGKYVADEQNLSFIDIDSYIEEKYKLTIPEIFSKHGEQYFRNLEFTCLQECINTADIIATGGGIIESEEVFNFLKNQKNIIWLDCNIDIIYSRINDDPHRPNANNKTIKQLNDLYCSRILRYNEIAFKKFDSHLLSISEIYYELLNLIKASDQY</sequence>
<feature type="chain" id="PRO_0000192413" description="Shikimate kinase">
    <location>
        <begin position="1"/>
        <end position="174"/>
    </location>
</feature>
<feature type="binding site" evidence="1">
    <location>
        <begin position="15"/>
        <end position="20"/>
    </location>
    <ligand>
        <name>ATP</name>
        <dbReference type="ChEBI" id="CHEBI:30616"/>
    </ligand>
</feature>
<feature type="binding site" evidence="1">
    <location>
        <position position="19"/>
    </location>
    <ligand>
        <name>Mg(2+)</name>
        <dbReference type="ChEBI" id="CHEBI:18420"/>
    </ligand>
</feature>
<feature type="binding site" evidence="1">
    <location>
        <position position="37"/>
    </location>
    <ligand>
        <name>substrate</name>
    </ligand>
</feature>
<feature type="binding site" evidence="1">
    <location>
        <position position="61"/>
    </location>
    <ligand>
        <name>substrate</name>
    </ligand>
</feature>
<feature type="binding site" evidence="1">
    <location>
        <position position="82"/>
    </location>
    <ligand>
        <name>substrate</name>
    </ligand>
</feature>
<feature type="binding site" evidence="1">
    <location>
        <position position="120"/>
    </location>
    <ligand>
        <name>ATP</name>
        <dbReference type="ChEBI" id="CHEBI:30616"/>
    </ligand>
</feature>
<feature type="binding site" evidence="1">
    <location>
        <position position="138"/>
    </location>
    <ligand>
        <name>substrate</name>
    </ligand>
</feature>
<reference key="1">
    <citation type="journal article" date="2004" name="Proc. Natl. Acad. Sci. U.S.A.">
        <title>Complete genomes of two clinical Staphylococcus aureus strains: evidence for the rapid evolution of virulence and drug resistance.</title>
        <authorList>
            <person name="Holden M.T.G."/>
            <person name="Feil E.J."/>
            <person name="Lindsay J.A."/>
            <person name="Peacock S.J."/>
            <person name="Day N.P.J."/>
            <person name="Enright M.C."/>
            <person name="Foster T.J."/>
            <person name="Moore C.E."/>
            <person name="Hurst L."/>
            <person name="Atkin R."/>
            <person name="Barron A."/>
            <person name="Bason N."/>
            <person name="Bentley S.D."/>
            <person name="Chillingworth C."/>
            <person name="Chillingworth T."/>
            <person name="Churcher C."/>
            <person name="Clark L."/>
            <person name="Corton C."/>
            <person name="Cronin A."/>
            <person name="Doggett J."/>
            <person name="Dowd L."/>
            <person name="Feltwell T."/>
            <person name="Hance Z."/>
            <person name="Harris B."/>
            <person name="Hauser H."/>
            <person name="Holroyd S."/>
            <person name="Jagels K."/>
            <person name="James K.D."/>
            <person name="Lennard N."/>
            <person name="Line A."/>
            <person name="Mayes R."/>
            <person name="Moule S."/>
            <person name="Mungall K."/>
            <person name="Ormond D."/>
            <person name="Quail M.A."/>
            <person name="Rabbinowitsch E."/>
            <person name="Rutherford K.M."/>
            <person name="Sanders M."/>
            <person name="Sharp S."/>
            <person name="Simmonds M."/>
            <person name="Stevens K."/>
            <person name="Whitehead S."/>
            <person name="Barrell B.G."/>
            <person name="Spratt B.G."/>
            <person name="Parkhill J."/>
        </authorList>
    </citation>
    <scope>NUCLEOTIDE SEQUENCE [LARGE SCALE GENOMIC DNA]</scope>
    <source>
        <strain>MRSA252</strain>
    </source>
</reference>
<gene>
    <name evidence="1" type="primary">aroK</name>
    <name type="ordered locus">SAR1615</name>
</gene>
<dbReference type="EC" id="2.7.1.71" evidence="1"/>
<dbReference type="EMBL" id="BX571856">
    <property type="protein sequence ID" value="CAG40610.1"/>
    <property type="molecule type" value="Genomic_DNA"/>
</dbReference>
<dbReference type="RefSeq" id="WP_001015125.1">
    <property type="nucleotide sequence ID" value="NC_002952.2"/>
</dbReference>
<dbReference type="SMR" id="Q6GGG1"/>
<dbReference type="KEGG" id="sar:SAR1615"/>
<dbReference type="HOGENOM" id="CLU_057607_4_3_9"/>
<dbReference type="BRENDA" id="2.7.1.71">
    <property type="organism ID" value="3352"/>
</dbReference>
<dbReference type="UniPathway" id="UPA00053">
    <property type="reaction ID" value="UER00088"/>
</dbReference>
<dbReference type="Proteomes" id="UP000000596">
    <property type="component" value="Chromosome"/>
</dbReference>
<dbReference type="GO" id="GO:0005829">
    <property type="term" value="C:cytosol"/>
    <property type="evidence" value="ECO:0007669"/>
    <property type="project" value="TreeGrafter"/>
</dbReference>
<dbReference type="GO" id="GO:0005524">
    <property type="term" value="F:ATP binding"/>
    <property type="evidence" value="ECO:0007669"/>
    <property type="project" value="UniProtKB-UniRule"/>
</dbReference>
<dbReference type="GO" id="GO:0000287">
    <property type="term" value="F:magnesium ion binding"/>
    <property type="evidence" value="ECO:0007669"/>
    <property type="project" value="UniProtKB-UniRule"/>
</dbReference>
<dbReference type="GO" id="GO:0004765">
    <property type="term" value="F:shikimate kinase activity"/>
    <property type="evidence" value="ECO:0007669"/>
    <property type="project" value="UniProtKB-UniRule"/>
</dbReference>
<dbReference type="GO" id="GO:0008652">
    <property type="term" value="P:amino acid biosynthetic process"/>
    <property type="evidence" value="ECO:0007669"/>
    <property type="project" value="UniProtKB-KW"/>
</dbReference>
<dbReference type="GO" id="GO:0009073">
    <property type="term" value="P:aromatic amino acid family biosynthetic process"/>
    <property type="evidence" value="ECO:0007669"/>
    <property type="project" value="UniProtKB-KW"/>
</dbReference>
<dbReference type="GO" id="GO:0009423">
    <property type="term" value="P:chorismate biosynthetic process"/>
    <property type="evidence" value="ECO:0007669"/>
    <property type="project" value="UniProtKB-UniRule"/>
</dbReference>
<dbReference type="CDD" id="cd00464">
    <property type="entry name" value="SK"/>
    <property type="match status" value="1"/>
</dbReference>
<dbReference type="Gene3D" id="3.40.50.300">
    <property type="entry name" value="P-loop containing nucleotide triphosphate hydrolases"/>
    <property type="match status" value="1"/>
</dbReference>
<dbReference type="HAMAP" id="MF_00109">
    <property type="entry name" value="Shikimate_kinase"/>
    <property type="match status" value="1"/>
</dbReference>
<dbReference type="InterPro" id="IPR027417">
    <property type="entry name" value="P-loop_NTPase"/>
</dbReference>
<dbReference type="InterPro" id="IPR031322">
    <property type="entry name" value="Shikimate/glucono_kinase"/>
</dbReference>
<dbReference type="InterPro" id="IPR000623">
    <property type="entry name" value="Shikimate_kinase/TSH1"/>
</dbReference>
<dbReference type="InterPro" id="IPR023000">
    <property type="entry name" value="Shikimate_kinase_CS"/>
</dbReference>
<dbReference type="PANTHER" id="PTHR21087">
    <property type="entry name" value="SHIKIMATE KINASE"/>
    <property type="match status" value="1"/>
</dbReference>
<dbReference type="PANTHER" id="PTHR21087:SF16">
    <property type="entry name" value="SHIKIMATE KINASE 1, CHLOROPLASTIC"/>
    <property type="match status" value="1"/>
</dbReference>
<dbReference type="Pfam" id="PF01202">
    <property type="entry name" value="SKI"/>
    <property type="match status" value="1"/>
</dbReference>
<dbReference type="PRINTS" id="PR01100">
    <property type="entry name" value="SHIKIMTKNASE"/>
</dbReference>
<dbReference type="SUPFAM" id="SSF52540">
    <property type="entry name" value="P-loop containing nucleoside triphosphate hydrolases"/>
    <property type="match status" value="1"/>
</dbReference>
<dbReference type="PROSITE" id="PS01128">
    <property type="entry name" value="SHIKIMATE_KINASE"/>
    <property type="match status" value="1"/>
</dbReference>
<keyword id="KW-0028">Amino-acid biosynthesis</keyword>
<keyword id="KW-0057">Aromatic amino acid biosynthesis</keyword>
<keyword id="KW-0067">ATP-binding</keyword>
<keyword id="KW-0963">Cytoplasm</keyword>
<keyword id="KW-0418">Kinase</keyword>
<keyword id="KW-0460">Magnesium</keyword>
<keyword id="KW-0479">Metal-binding</keyword>
<keyword id="KW-0547">Nucleotide-binding</keyword>
<keyword id="KW-0808">Transferase</keyword>
<accession>Q6GGG1</accession>
<comment type="function">
    <text evidence="1">Catalyzes the specific phosphorylation of the 3-hydroxyl group of shikimic acid using ATP as a cosubstrate.</text>
</comment>
<comment type="catalytic activity">
    <reaction evidence="1">
        <text>shikimate + ATP = 3-phosphoshikimate + ADP + H(+)</text>
        <dbReference type="Rhea" id="RHEA:13121"/>
        <dbReference type="ChEBI" id="CHEBI:15378"/>
        <dbReference type="ChEBI" id="CHEBI:30616"/>
        <dbReference type="ChEBI" id="CHEBI:36208"/>
        <dbReference type="ChEBI" id="CHEBI:145989"/>
        <dbReference type="ChEBI" id="CHEBI:456216"/>
        <dbReference type="EC" id="2.7.1.71"/>
    </reaction>
</comment>
<comment type="cofactor">
    <cofactor evidence="1">
        <name>Mg(2+)</name>
        <dbReference type="ChEBI" id="CHEBI:18420"/>
    </cofactor>
    <text evidence="1">Binds 1 Mg(2+) ion per subunit.</text>
</comment>
<comment type="pathway">
    <text evidence="1">Metabolic intermediate biosynthesis; chorismate biosynthesis; chorismate from D-erythrose 4-phosphate and phosphoenolpyruvate: step 5/7.</text>
</comment>
<comment type="subunit">
    <text evidence="1">Monomer.</text>
</comment>
<comment type="subcellular location">
    <subcellularLocation>
        <location evidence="1">Cytoplasm</location>
    </subcellularLocation>
</comment>
<comment type="similarity">
    <text evidence="1">Belongs to the shikimate kinase family.</text>
</comment>
<name>AROK_STAAR</name>
<evidence type="ECO:0000255" key="1">
    <source>
        <dbReference type="HAMAP-Rule" id="MF_00109"/>
    </source>
</evidence>